<reference key="1">
    <citation type="journal article" date="2005" name="Nucleic Acids Res.">
        <title>Genomic blueprint of Hahella chejuensis, a marine microbe producing an algicidal agent.</title>
        <authorList>
            <person name="Jeong H."/>
            <person name="Yim J.H."/>
            <person name="Lee C."/>
            <person name="Choi S.-H."/>
            <person name="Park Y.K."/>
            <person name="Yoon S.H."/>
            <person name="Hur C.-G."/>
            <person name="Kang H.-Y."/>
            <person name="Kim D."/>
            <person name="Lee H.H."/>
            <person name="Park K.H."/>
            <person name="Park S.-H."/>
            <person name="Park H.-S."/>
            <person name="Lee H.K."/>
            <person name="Oh T.K."/>
            <person name="Kim J.F."/>
        </authorList>
    </citation>
    <scope>NUCLEOTIDE SEQUENCE [LARGE SCALE GENOMIC DNA]</scope>
    <source>
        <strain>KCTC 2396</strain>
    </source>
</reference>
<proteinExistence type="inferred from homology"/>
<sequence length="38" mass="4329">MKVRASVKKMCRGCKIIRRNGAVMVICSTEPRHKQKQG</sequence>
<comment type="similarity">
    <text evidence="1">Belongs to the bacterial ribosomal protein bL36 family.</text>
</comment>
<evidence type="ECO:0000255" key="1">
    <source>
        <dbReference type="HAMAP-Rule" id="MF_00251"/>
    </source>
</evidence>
<evidence type="ECO:0000305" key="2"/>
<organism>
    <name type="scientific">Hahella chejuensis (strain KCTC 2396)</name>
    <dbReference type="NCBI Taxonomy" id="349521"/>
    <lineage>
        <taxon>Bacteria</taxon>
        <taxon>Pseudomonadati</taxon>
        <taxon>Pseudomonadota</taxon>
        <taxon>Gammaproteobacteria</taxon>
        <taxon>Oceanospirillales</taxon>
        <taxon>Hahellaceae</taxon>
        <taxon>Hahella</taxon>
    </lineage>
</organism>
<name>RL36_HAHCH</name>
<gene>
    <name evidence="1" type="primary">rpmJ</name>
    <name type="ordered locus">HCH_10026</name>
</gene>
<feature type="chain" id="PRO_0000302214" description="Large ribosomal subunit protein bL36">
    <location>
        <begin position="1"/>
        <end position="38"/>
    </location>
</feature>
<accession>Q2S933</accession>
<protein>
    <recommendedName>
        <fullName evidence="1">Large ribosomal subunit protein bL36</fullName>
    </recommendedName>
    <alternativeName>
        <fullName evidence="2">50S ribosomal protein L36</fullName>
    </alternativeName>
</protein>
<dbReference type="EMBL" id="CP000155">
    <property type="protein sequence ID" value="ABC32841.1"/>
    <property type="molecule type" value="Genomic_DNA"/>
</dbReference>
<dbReference type="SMR" id="Q2S933"/>
<dbReference type="STRING" id="349521.HCH_10026"/>
<dbReference type="KEGG" id="hch:HCH_10026"/>
<dbReference type="eggNOG" id="COG0257">
    <property type="taxonomic scope" value="Bacteria"/>
</dbReference>
<dbReference type="HOGENOM" id="CLU_135723_6_2_6"/>
<dbReference type="OrthoDB" id="9802520at2"/>
<dbReference type="Proteomes" id="UP000000238">
    <property type="component" value="Chromosome"/>
</dbReference>
<dbReference type="GO" id="GO:0005737">
    <property type="term" value="C:cytoplasm"/>
    <property type="evidence" value="ECO:0007669"/>
    <property type="project" value="UniProtKB-ARBA"/>
</dbReference>
<dbReference type="GO" id="GO:1990904">
    <property type="term" value="C:ribonucleoprotein complex"/>
    <property type="evidence" value="ECO:0007669"/>
    <property type="project" value="UniProtKB-KW"/>
</dbReference>
<dbReference type="GO" id="GO:0005840">
    <property type="term" value="C:ribosome"/>
    <property type="evidence" value="ECO:0007669"/>
    <property type="project" value="UniProtKB-KW"/>
</dbReference>
<dbReference type="GO" id="GO:0003735">
    <property type="term" value="F:structural constituent of ribosome"/>
    <property type="evidence" value="ECO:0007669"/>
    <property type="project" value="InterPro"/>
</dbReference>
<dbReference type="GO" id="GO:0006412">
    <property type="term" value="P:translation"/>
    <property type="evidence" value="ECO:0007669"/>
    <property type="project" value="UniProtKB-UniRule"/>
</dbReference>
<dbReference type="HAMAP" id="MF_00251">
    <property type="entry name" value="Ribosomal_bL36"/>
    <property type="match status" value="1"/>
</dbReference>
<dbReference type="InterPro" id="IPR000473">
    <property type="entry name" value="Ribosomal_bL36"/>
</dbReference>
<dbReference type="InterPro" id="IPR035977">
    <property type="entry name" value="Ribosomal_bL36_sp"/>
</dbReference>
<dbReference type="NCBIfam" id="TIGR01022">
    <property type="entry name" value="rpmJ_bact"/>
    <property type="match status" value="1"/>
</dbReference>
<dbReference type="PANTHER" id="PTHR42888">
    <property type="entry name" value="50S RIBOSOMAL PROTEIN L36, CHLOROPLASTIC"/>
    <property type="match status" value="1"/>
</dbReference>
<dbReference type="PANTHER" id="PTHR42888:SF1">
    <property type="entry name" value="LARGE RIBOSOMAL SUBUNIT PROTEIN BL36C"/>
    <property type="match status" value="1"/>
</dbReference>
<dbReference type="Pfam" id="PF00444">
    <property type="entry name" value="Ribosomal_L36"/>
    <property type="match status" value="1"/>
</dbReference>
<dbReference type="SUPFAM" id="SSF57840">
    <property type="entry name" value="Ribosomal protein L36"/>
    <property type="match status" value="1"/>
</dbReference>
<dbReference type="PROSITE" id="PS00828">
    <property type="entry name" value="RIBOSOMAL_L36"/>
    <property type="match status" value="1"/>
</dbReference>
<keyword id="KW-1185">Reference proteome</keyword>
<keyword id="KW-0687">Ribonucleoprotein</keyword>
<keyword id="KW-0689">Ribosomal protein</keyword>